<feature type="chain" id="PRO_0000110635" description="UPF0358 protein BA_4159/GBAA_4159/BAS3861">
    <location>
        <begin position="1"/>
        <end position="95"/>
    </location>
</feature>
<dbReference type="EMBL" id="AE016879">
    <property type="protein sequence ID" value="AAP27883.1"/>
    <property type="molecule type" value="Genomic_DNA"/>
</dbReference>
<dbReference type="EMBL" id="AE017334">
    <property type="protein sequence ID" value="AAT33281.1"/>
    <property type="molecule type" value="Genomic_DNA"/>
</dbReference>
<dbReference type="EMBL" id="AE017225">
    <property type="protein sequence ID" value="AAT56162.1"/>
    <property type="molecule type" value="Genomic_DNA"/>
</dbReference>
<dbReference type="RefSeq" id="NP_846397.1">
    <property type="nucleotide sequence ID" value="NC_003997.3"/>
</dbReference>
<dbReference type="RefSeq" id="WP_000135696.1">
    <property type="nucleotide sequence ID" value="NZ_WXXJ01000027.1"/>
</dbReference>
<dbReference type="RefSeq" id="YP_030111.1">
    <property type="nucleotide sequence ID" value="NC_005945.1"/>
</dbReference>
<dbReference type="SMR" id="Q81MT5"/>
<dbReference type="STRING" id="261594.GBAA_4159"/>
<dbReference type="DNASU" id="1088768"/>
<dbReference type="GeneID" id="45023836"/>
<dbReference type="KEGG" id="ban:BA_4159"/>
<dbReference type="KEGG" id="banh:HYU01_20345"/>
<dbReference type="KEGG" id="bar:GBAA_4159"/>
<dbReference type="KEGG" id="bat:BAS3861"/>
<dbReference type="PATRIC" id="fig|198094.11.peg.4130"/>
<dbReference type="eggNOG" id="COG4838">
    <property type="taxonomic scope" value="Bacteria"/>
</dbReference>
<dbReference type="HOGENOM" id="CLU_160493_1_0_9"/>
<dbReference type="OMA" id="KLIQVQM"/>
<dbReference type="OrthoDB" id="2135235at2"/>
<dbReference type="Proteomes" id="UP000000427">
    <property type="component" value="Chromosome"/>
</dbReference>
<dbReference type="Proteomes" id="UP000000594">
    <property type="component" value="Chromosome"/>
</dbReference>
<dbReference type="Gene3D" id="1.10.287.750">
    <property type="entry name" value="SO2669-like"/>
    <property type="match status" value="1"/>
</dbReference>
<dbReference type="HAMAP" id="MF_01560">
    <property type="entry name" value="UPF0358"/>
    <property type="match status" value="1"/>
</dbReference>
<dbReference type="InterPro" id="IPR009983">
    <property type="entry name" value="UPF0358"/>
</dbReference>
<dbReference type="InterPro" id="IPR036270">
    <property type="entry name" value="UPF0358_sf"/>
</dbReference>
<dbReference type="NCBIfam" id="NF010187">
    <property type="entry name" value="PRK13666.1"/>
    <property type="match status" value="1"/>
</dbReference>
<dbReference type="Pfam" id="PF07408">
    <property type="entry name" value="DUF1507"/>
    <property type="match status" value="1"/>
</dbReference>
<dbReference type="SUPFAM" id="SSF140404">
    <property type="entry name" value="EF2458-like"/>
    <property type="match status" value="1"/>
</dbReference>
<gene>
    <name type="ordered locus">BA_4159</name>
    <name type="ordered locus">GBAA_4159</name>
    <name type="ordered locus">BAS3861</name>
</gene>
<keyword id="KW-1185">Reference proteome</keyword>
<organism>
    <name type="scientific">Bacillus anthracis</name>
    <dbReference type="NCBI Taxonomy" id="1392"/>
    <lineage>
        <taxon>Bacteria</taxon>
        <taxon>Bacillati</taxon>
        <taxon>Bacillota</taxon>
        <taxon>Bacilli</taxon>
        <taxon>Bacillales</taxon>
        <taxon>Bacillaceae</taxon>
        <taxon>Bacillus</taxon>
        <taxon>Bacillus cereus group</taxon>
    </lineage>
</organism>
<evidence type="ECO:0000255" key="1">
    <source>
        <dbReference type="HAMAP-Rule" id="MF_01560"/>
    </source>
</evidence>
<name>Y4159_BACAN</name>
<accession>Q81MT5</accession>
<accession>Q6HU77</accession>
<accession>Q6KNG1</accession>
<reference key="1">
    <citation type="journal article" date="2003" name="Nature">
        <title>The genome sequence of Bacillus anthracis Ames and comparison to closely related bacteria.</title>
        <authorList>
            <person name="Read T.D."/>
            <person name="Peterson S.N."/>
            <person name="Tourasse N.J."/>
            <person name="Baillie L.W."/>
            <person name="Paulsen I.T."/>
            <person name="Nelson K.E."/>
            <person name="Tettelin H."/>
            <person name="Fouts D.E."/>
            <person name="Eisen J.A."/>
            <person name="Gill S.R."/>
            <person name="Holtzapple E.K."/>
            <person name="Okstad O.A."/>
            <person name="Helgason E."/>
            <person name="Rilstone J."/>
            <person name="Wu M."/>
            <person name="Kolonay J.F."/>
            <person name="Beanan M.J."/>
            <person name="Dodson R.J."/>
            <person name="Brinkac L.M."/>
            <person name="Gwinn M.L."/>
            <person name="DeBoy R.T."/>
            <person name="Madpu R."/>
            <person name="Daugherty S.C."/>
            <person name="Durkin A.S."/>
            <person name="Haft D.H."/>
            <person name="Nelson W.C."/>
            <person name="Peterson J.D."/>
            <person name="Pop M."/>
            <person name="Khouri H.M."/>
            <person name="Radune D."/>
            <person name="Benton J.L."/>
            <person name="Mahamoud Y."/>
            <person name="Jiang L."/>
            <person name="Hance I.R."/>
            <person name="Weidman J.F."/>
            <person name="Berry K.J."/>
            <person name="Plaut R.D."/>
            <person name="Wolf A.M."/>
            <person name="Watkins K.L."/>
            <person name="Nierman W.C."/>
            <person name="Hazen A."/>
            <person name="Cline R.T."/>
            <person name="Redmond C."/>
            <person name="Thwaite J.E."/>
            <person name="White O."/>
            <person name="Salzberg S.L."/>
            <person name="Thomason B."/>
            <person name="Friedlander A.M."/>
            <person name="Koehler T.M."/>
            <person name="Hanna P.C."/>
            <person name="Kolstoe A.-B."/>
            <person name="Fraser C.M."/>
        </authorList>
    </citation>
    <scope>NUCLEOTIDE SEQUENCE [LARGE SCALE GENOMIC DNA]</scope>
    <source>
        <strain>Ames / isolate Porton</strain>
    </source>
</reference>
<reference key="2">
    <citation type="journal article" date="2009" name="J. Bacteriol.">
        <title>The complete genome sequence of Bacillus anthracis Ames 'Ancestor'.</title>
        <authorList>
            <person name="Ravel J."/>
            <person name="Jiang L."/>
            <person name="Stanley S.T."/>
            <person name="Wilson M.R."/>
            <person name="Decker R.S."/>
            <person name="Read T.D."/>
            <person name="Worsham P."/>
            <person name="Keim P.S."/>
            <person name="Salzberg S.L."/>
            <person name="Fraser-Liggett C.M."/>
            <person name="Rasko D.A."/>
        </authorList>
    </citation>
    <scope>NUCLEOTIDE SEQUENCE [LARGE SCALE GENOMIC DNA]</scope>
    <source>
        <strain>Ames ancestor</strain>
    </source>
</reference>
<reference key="3">
    <citation type="submission" date="2004-01" db="EMBL/GenBank/DDBJ databases">
        <title>Complete genome sequence of Bacillus anthracis Sterne.</title>
        <authorList>
            <person name="Brettin T.S."/>
            <person name="Bruce D."/>
            <person name="Challacombe J.F."/>
            <person name="Gilna P."/>
            <person name="Han C."/>
            <person name="Hill K."/>
            <person name="Hitchcock P."/>
            <person name="Jackson P."/>
            <person name="Keim P."/>
            <person name="Longmire J."/>
            <person name="Lucas S."/>
            <person name="Okinaka R."/>
            <person name="Richardson P."/>
            <person name="Rubin E."/>
            <person name="Tice H."/>
        </authorList>
    </citation>
    <scope>NUCLEOTIDE SEQUENCE [LARGE SCALE GENOMIC DNA]</scope>
    <source>
        <strain>Sterne</strain>
    </source>
</reference>
<comment type="similarity">
    <text evidence="1">Belongs to the UPF0358 family.</text>
</comment>
<protein>
    <recommendedName>
        <fullName evidence="1">UPF0358 protein BA_4159/GBAA_4159/BAS3861</fullName>
    </recommendedName>
</protein>
<sequence>MASETVSNHQEKALALLQADAEKILRLIKVQMDHLTMPQCPLYEEVLDTQMFGLSREVDFAVRLGLIAEEQGKVMLGELERELSALHEAFTNKQQ</sequence>
<proteinExistence type="inferred from homology"/>